<evidence type="ECO:0000250" key="1">
    <source>
        <dbReference type="UniProtKB" id="P04694"/>
    </source>
</evidence>
<evidence type="ECO:0000255" key="2"/>
<evidence type="ECO:0000256" key="3">
    <source>
        <dbReference type="SAM" id="MobiDB-lite"/>
    </source>
</evidence>
<evidence type="ECO:0000269" key="4">
    <source>
    </source>
</evidence>
<evidence type="ECO:0000303" key="5">
    <source>
    </source>
</evidence>
<evidence type="ECO:0000305" key="6"/>
<evidence type="ECO:0000312" key="7">
    <source>
        <dbReference type="EMBL" id="BAA87052.2"/>
    </source>
</evidence>
<evidence type="ECO:0000312" key="8">
    <source>
        <dbReference type="EMBL" id="BAA87055.1"/>
    </source>
</evidence>
<feature type="chain" id="PRO_0000405350" description="Nicotianamine aminotransferase A">
    <location>
        <begin position="1"/>
        <end position="461"/>
    </location>
</feature>
<feature type="region of interest" description="Disordered" evidence="3">
    <location>
        <begin position="1"/>
        <end position="29"/>
    </location>
</feature>
<feature type="compositionally biased region" description="Low complexity" evidence="3">
    <location>
        <begin position="11"/>
        <end position="29"/>
    </location>
</feature>
<feature type="modified residue" description="N6-(pyridoxal phosphate)lysine" evidence="1">
    <location>
        <position position="289"/>
    </location>
</feature>
<feature type="sequence conflict" description="In Ref. 1; BAA87055." evidence="6" ref="1">
    <original>D</original>
    <variation>N</variation>
    <location>
        <position position="402"/>
    </location>
</feature>
<accession>Q9ST02</accession>
<accession>Q9SMG7</accession>
<name>NAATA_HORVU</name>
<protein>
    <recommendedName>
        <fullName evidence="7">Nicotianamine aminotransferase A</fullName>
        <ecNumber>2.6.1.80</ecNumber>
    </recommendedName>
    <alternativeName>
        <fullName evidence="5">Nicotianamine aminotransferase III</fullName>
        <shortName evidence="5">NAAT-III</shortName>
    </alternativeName>
</protein>
<sequence>MVHQSNGHGEAAAAAANGKSNGHAAAANGKSNGHAAAAAVEWNFARGKDGILATTGAKNSIRAIRYKISASVEESGPRPVLPLAHGDPSVFPAFRTAVEAEDAVAAALRTGQFNCYAAGVGLPAARSAVAEHLSQGVPYKLSADDVFLTAGGTQAIEVIIPVLAQTAGANILLPRPGYPNYEARAAFNKLEVRHFDLIPDKGWEIDIDSLESIADKNTTAMVIINPNNPCGSVYSYDHLAKVAEVARKLGILVIADEVYGKLVLGSAPFIPMGVFGHIAPVLSIGSLSKSWIVPGWRLGWVAVYDPTKILEKTKISTSITNYLNVSTDPATFVQEALPKILENTKADFFKRIIGLLKESSEICYREIKENKYITCPHKPEGSMFVMVKLNLHLLEEIHDDIDFCCKLAKEESVILCPGSVLGMENWVRITFACVPSSLQDGLERVKSFCQRNKKKNSINGC</sequence>
<reference evidence="6 8" key="1">
    <citation type="journal article" date="1999" name="Plant Physiol.">
        <title>Cloning two genes for nicotianamine aminotransferase, a critical enzyme in iron acquisition (Strategy II) in graminaceous plants.</title>
        <authorList>
            <person name="Takahashi M."/>
            <person name="Yamaguchi H."/>
            <person name="Nakanishi H."/>
            <person name="Shioiri T."/>
            <person name="Nishizawa N.K."/>
            <person name="Mori S."/>
        </authorList>
    </citation>
    <scope>NUCLEOTIDE SEQUENCE [GENOMIC DNA / MRNA]</scope>
    <scope>PROTEIN SEQUENCE OF 33-47; 222-232; 273-280 AND 385-403</scope>
    <scope>FUNCTION</scope>
    <scope>CATALYTIC ACTIVITY</scope>
    <scope>TISSUE SPECIFICITY</scope>
    <scope>INDUCTION</scope>
    <source>
        <strain evidence="4">cv. Ehimehadaka No.1</strain>
        <tissue evidence="7">Root</tissue>
    </source>
</reference>
<gene>
    <name evidence="8" type="primary">naat-A</name>
</gene>
<dbReference type="EC" id="2.6.1.80"/>
<dbReference type="EMBL" id="AB024006">
    <property type="protein sequence ID" value="BAA87055.1"/>
    <property type="molecule type" value="Genomic_DNA"/>
</dbReference>
<dbReference type="EMBL" id="D88273">
    <property type="protein sequence ID" value="BAA87052.2"/>
    <property type="molecule type" value="mRNA"/>
</dbReference>
<dbReference type="SMR" id="Q9ST02"/>
<dbReference type="KEGG" id="ag:BAA87052"/>
<dbReference type="BioCyc" id="MetaCyc:MONOMER-13945"/>
<dbReference type="BRENDA" id="2.6.1.80">
    <property type="organism ID" value="2687"/>
</dbReference>
<dbReference type="ExpressionAtlas" id="Q9ST02">
    <property type="expression patterns" value="baseline and differential"/>
</dbReference>
<dbReference type="GO" id="GO:0004838">
    <property type="term" value="F:L-tyrosine-2-oxoglutarate transaminase activity"/>
    <property type="evidence" value="ECO:0007669"/>
    <property type="project" value="TreeGrafter"/>
</dbReference>
<dbReference type="GO" id="GO:0033855">
    <property type="term" value="F:nicotianamine aminotransferase activity"/>
    <property type="evidence" value="ECO:0000314"/>
    <property type="project" value="UniProtKB"/>
</dbReference>
<dbReference type="GO" id="GO:0030170">
    <property type="term" value="F:pyridoxal phosphate binding"/>
    <property type="evidence" value="ECO:0007669"/>
    <property type="project" value="InterPro"/>
</dbReference>
<dbReference type="GO" id="GO:0009058">
    <property type="term" value="P:biosynthetic process"/>
    <property type="evidence" value="ECO:0007669"/>
    <property type="project" value="InterPro"/>
</dbReference>
<dbReference type="GO" id="GO:0006572">
    <property type="term" value="P:tyrosine catabolic process"/>
    <property type="evidence" value="ECO:0007669"/>
    <property type="project" value="TreeGrafter"/>
</dbReference>
<dbReference type="CDD" id="cd00609">
    <property type="entry name" value="AAT_like"/>
    <property type="match status" value="1"/>
</dbReference>
<dbReference type="FunFam" id="3.90.1150.10:FF:000040">
    <property type="entry name" value="Tyrosine aminotransferase"/>
    <property type="match status" value="1"/>
</dbReference>
<dbReference type="FunFam" id="3.40.640.10:FF:000048">
    <property type="entry name" value="tyrosine aminotransferase"/>
    <property type="match status" value="1"/>
</dbReference>
<dbReference type="Gene3D" id="3.90.1150.10">
    <property type="entry name" value="Aspartate Aminotransferase, domain 1"/>
    <property type="match status" value="1"/>
</dbReference>
<dbReference type="Gene3D" id="3.40.640.10">
    <property type="entry name" value="Type I PLP-dependent aspartate aminotransferase-like (Major domain)"/>
    <property type="match status" value="1"/>
</dbReference>
<dbReference type="InterPro" id="IPR004839">
    <property type="entry name" value="Aminotransferase_I/II_large"/>
</dbReference>
<dbReference type="InterPro" id="IPR015424">
    <property type="entry name" value="PyrdxlP-dep_Trfase"/>
</dbReference>
<dbReference type="InterPro" id="IPR015421">
    <property type="entry name" value="PyrdxlP-dep_Trfase_major"/>
</dbReference>
<dbReference type="InterPro" id="IPR015422">
    <property type="entry name" value="PyrdxlP-dep_Trfase_small"/>
</dbReference>
<dbReference type="InterPro" id="IPR005958">
    <property type="entry name" value="TyrNic_aminoTrfase"/>
</dbReference>
<dbReference type="NCBIfam" id="TIGR01265">
    <property type="entry name" value="tyr_nico_aTase"/>
    <property type="match status" value="1"/>
</dbReference>
<dbReference type="PANTHER" id="PTHR45744:SF41">
    <property type="entry name" value="NICOTIANAMINE AMINOTRANSFERASE 1"/>
    <property type="match status" value="1"/>
</dbReference>
<dbReference type="PANTHER" id="PTHR45744">
    <property type="entry name" value="TYROSINE AMINOTRANSFERASE"/>
    <property type="match status" value="1"/>
</dbReference>
<dbReference type="Pfam" id="PF00155">
    <property type="entry name" value="Aminotran_1_2"/>
    <property type="match status" value="1"/>
</dbReference>
<dbReference type="PIRSF" id="PIRSF000517">
    <property type="entry name" value="Tyr_transaminase"/>
    <property type="match status" value="1"/>
</dbReference>
<dbReference type="SUPFAM" id="SSF53383">
    <property type="entry name" value="PLP-dependent transferases"/>
    <property type="match status" value="1"/>
</dbReference>
<keyword id="KW-0032">Aminotransferase</keyword>
<keyword id="KW-0903">Direct protein sequencing</keyword>
<keyword id="KW-0663">Pyridoxal phosphate</keyword>
<keyword id="KW-0808">Transferase</keyword>
<organism>
    <name type="scientific">Hordeum vulgare</name>
    <name type="common">Barley</name>
    <dbReference type="NCBI Taxonomy" id="4513"/>
    <lineage>
        <taxon>Eukaryota</taxon>
        <taxon>Viridiplantae</taxon>
        <taxon>Streptophyta</taxon>
        <taxon>Embryophyta</taxon>
        <taxon>Tracheophyta</taxon>
        <taxon>Spermatophyta</taxon>
        <taxon>Magnoliopsida</taxon>
        <taxon>Liliopsida</taxon>
        <taxon>Poales</taxon>
        <taxon>Poaceae</taxon>
        <taxon>BOP clade</taxon>
        <taxon>Pooideae</taxon>
        <taxon>Triticodae</taxon>
        <taxon>Triticeae</taxon>
        <taxon>Hordeinae</taxon>
        <taxon>Hordeum</taxon>
    </lineage>
</organism>
<proteinExistence type="evidence at protein level"/>
<comment type="function">
    <text evidence="4">Involved in biosynthesis of mugineic acid family phytosiderophores.</text>
</comment>
<comment type="catalytic activity">
    <reaction evidence="4">
        <text>nicotianamine + 2-oxoglutarate = 3''-deamino-3''-oxonicotianamine + L-glutamate</text>
        <dbReference type="Rhea" id="RHEA:22104"/>
        <dbReference type="ChEBI" id="CHEBI:16810"/>
        <dbReference type="ChEBI" id="CHEBI:29985"/>
        <dbReference type="ChEBI" id="CHEBI:58249"/>
        <dbReference type="ChEBI" id="CHEBI:58685"/>
        <dbReference type="EC" id="2.6.1.80"/>
    </reaction>
</comment>
<comment type="cofactor">
    <cofactor evidence="1">
        <name>pyridoxal 5'-phosphate</name>
        <dbReference type="ChEBI" id="CHEBI:597326"/>
    </cofactor>
</comment>
<comment type="tissue specificity">
    <text evidence="4">Expressed in roots, but not in leaves.</text>
</comment>
<comment type="induction">
    <text evidence="4">By iron deficiency. No expression is detected when sufficient iron is present.</text>
</comment>
<comment type="similarity">
    <text evidence="2">Belongs to the class-I pyridoxal-phosphate-dependent aminotransferase family.</text>
</comment>